<feature type="signal peptide" evidence="1">
    <location>
        <begin position="1"/>
        <end position="21"/>
    </location>
</feature>
<feature type="chain" id="PRO_0000360469" description="SPbeta prophage-derived uncharacterized protein YopL">
    <location>
        <begin position="22"/>
        <end position="41"/>
    </location>
</feature>
<protein>
    <recommendedName>
        <fullName>SPbeta prophage-derived uncharacterized protein YopL</fullName>
    </recommendedName>
</protein>
<gene>
    <name type="primary">yopL</name>
    <name type="ordered locus">BSU20850</name>
</gene>
<accession>O31926</accession>
<keyword id="KW-1185">Reference proteome</keyword>
<keyword id="KW-0732">Signal</keyword>
<sequence>MKKLIMALVILGALGTSYISADSSIQQASGDYEVAGMPRGA</sequence>
<evidence type="ECO:0000255" key="1"/>
<proteinExistence type="inferred from homology"/>
<organism>
    <name type="scientific">Bacillus subtilis (strain 168)</name>
    <dbReference type="NCBI Taxonomy" id="224308"/>
    <lineage>
        <taxon>Bacteria</taxon>
        <taxon>Bacillati</taxon>
        <taxon>Bacillota</taxon>
        <taxon>Bacilli</taxon>
        <taxon>Bacillales</taxon>
        <taxon>Bacillaceae</taxon>
        <taxon>Bacillus</taxon>
    </lineage>
</organism>
<dbReference type="EMBL" id="AL009126">
    <property type="protein sequence ID" value="CAB14003.1"/>
    <property type="molecule type" value="Genomic_DNA"/>
</dbReference>
<dbReference type="FunCoup" id="O31926">
    <property type="interactions" value="88"/>
</dbReference>
<dbReference type="STRING" id="224308.BSU20850"/>
<dbReference type="PaxDb" id="224308-BSU20850"/>
<dbReference type="EnsemblBacteria" id="CAB14003">
    <property type="protein sequence ID" value="CAB14003"/>
    <property type="gene ID" value="BSU_20850"/>
</dbReference>
<dbReference type="GeneID" id="939422"/>
<dbReference type="KEGG" id="bsu:BSU20850"/>
<dbReference type="PATRIC" id="fig|224308.179.peg.2275"/>
<dbReference type="InParanoid" id="O31926"/>
<dbReference type="OrthoDB" id="2916108at2"/>
<dbReference type="BioCyc" id="BSUB:BSU20850-MONOMER"/>
<dbReference type="Proteomes" id="UP000001570">
    <property type="component" value="Chromosome"/>
</dbReference>
<dbReference type="NCBIfam" id="NF033802">
    <property type="entry name" value="AimP_fam"/>
    <property type="match status" value="1"/>
</dbReference>
<name>YOPL_BACSU</name>
<reference key="1">
    <citation type="journal article" date="1997" name="Nature">
        <title>The complete genome sequence of the Gram-positive bacterium Bacillus subtilis.</title>
        <authorList>
            <person name="Kunst F."/>
            <person name="Ogasawara N."/>
            <person name="Moszer I."/>
            <person name="Albertini A.M."/>
            <person name="Alloni G."/>
            <person name="Azevedo V."/>
            <person name="Bertero M.G."/>
            <person name="Bessieres P."/>
            <person name="Bolotin A."/>
            <person name="Borchert S."/>
            <person name="Borriss R."/>
            <person name="Boursier L."/>
            <person name="Brans A."/>
            <person name="Braun M."/>
            <person name="Brignell S.C."/>
            <person name="Bron S."/>
            <person name="Brouillet S."/>
            <person name="Bruschi C.V."/>
            <person name="Caldwell B."/>
            <person name="Capuano V."/>
            <person name="Carter N.M."/>
            <person name="Choi S.-K."/>
            <person name="Codani J.-J."/>
            <person name="Connerton I.F."/>
            <person name="Cummings N.J."/>
            <person name="Daniel R.A."/>
            <person name="Denizot F."/>
            <person name="Devine K.M."/>
            <person name="Duesterhoeft A."/>
            <person name="Ehrlich S.D."/>
            <person name="Emmerson P.T."/>
            <person name="Entian K.-D."/>
            <person name="Errington J."/>
            <person name="Fabret C."/>
            <person name="Ferrari E."/>
            <person name="Foulger D."/>
            <person name="Fritz C."/>
            <person name="Fujita M."/>
            <person name="Fujita Y."/>
            <person name="Fuma S."/>
            <person name="Galizzi A."/>
            <person name="Galleron N."/>
            <person name="Ghim S.-Y."/>
            <person name="Glaser P."/>
            <person name="Goffeau A."/>
            <person name="Golightly E.J."/>
            <person name="Grandi G."/>
            <person name="Guiseppi G."/>
            <person name="Guy B.J."/>
            <person name="Haga K."/>
            <person name="Haiech J."/>
            <person name="Harwood C.R."/>
            <person name="Henaut A."/>
            <person name="Hilbert H."/>
            <person name="Holsappel S."/>
            <person name="Hosono S."/>
            <person name="Hullo M.-F."/>
            <person name="Itaya M."/>
            <person name="Jones L.-M."/>
            <person name="Joris B."/>
            <person name="Karamata D."/>
            <person name="Kasahara Y."/>
            <person name="Klaerr-Blanchard M."/>
            <person name="Klein C."/>
            <person name="Kobayashi Y."/>
            <person name="Koetter P."/>
            <person name="Koningstein G."/>
            <person name="Krogh S."/>
            <person name="Kumano M."/>
            <person name="Kurita K."/>
            <person name="Lapidus A."/>
            <person name="Lardinois S."/>
            <person name="Lauber J."/>
            <person name="Lazarevic V."/>
            <person name="Lee S.-M."/>
            <person name="Levine A."/>
            <person name="Liu H."/>
            <person name="Masuda S."/>
            <person name="Mauel C."/>
            <person name="Medigue C."/>
            <person name="Medina N."/>
            <person name="Mellado R.P."/>
            <person name="Mizuno M."/>
            <person name="Moestl D."/>
            <person name="Nakai S."/>
            <person name="Noback M."/>
            <person name="Noone D."/>
            <person name="O'Reilly M."/>
            <person name="Ogawa K."/>
            <person name="Ogiwara A."/>
            <person name="Oudega B."/>
            <person name="Park S.-H."/>
            <person name="Parro V."/>
            <person name="Pohl T.M."/>
            <person name="Portetelle D."/>
            <person name="Porwollik S."/>
            <person name="Prescott A.M."/>
            <person name="Presecan E."/>
            <person name="Pujic P."/>
            <person name="Purnelle B."/>
            <person name="Rapoport G."/>
            <person name="Rey M."/>
            <person name="Reynolds S."/>
            <person name="Rieger M."/>
            <person name="Rivolta C."/>
            <person name="Rocha E."/>
            <person name="Roche B."/>
            <person name="Rose M."/>
            <person name="Sadaie Y."/>
            <person name="Sato T."/>
            <person name="Scanlan E."/>
            <person name="Schleich S."/>
            <person name="Schroeter R."/>
            <person name="Scoffone F."/>
            <person name="Sekiguchi J."/>
            <person name="Sekowska A."/>
            <person name="Seror S.J."/>
            <person name="Serror P."/>
            <person name="Shin B.-S."/>
            <person name="Soldo B."/>
            <person name="Sorokin A."/>
            <person name="Tacconi E."/>
            <person name="Takagi T."/>
            <person name="Takahashi H."/>
            <person name="Takemaru K."/>
            <person name="Takeuchi M."/>
            <person name="Tamakoshi A."/>
            <person name="Tanaka T."/>
            <person name="Terpstra P."/>
            <person name="Tognoni A."/>
            <person name="Tosato V."/>
            <person name="Uchiyama S."/>
            <person name="Vandenbol M."/>
            <person name="Vannier F."/>
            <person name="Vassarotti A."/>
            <person name="Viari A."/>
            <person name="Wambutt R."/>
            <person name="Wedler E."/>
            <person name="Wedler H."/>
            <person name="Weitzenegger T."/>
            <person name="Winters P."/>
            <person name="Wipat A."/>
            <person name="Yamamoto H."/>
            <person name="Yamane K."/>
            <person name="Yasumoto K."/>
            <person name="Yata K."/>
            <person name="Yoshida K."/>
            <person name="Yoshikawa H.-F."/>
            <person name="Zumstein E."/>
            <person name="Yoshikawa H."/>
            <person name="Danchin A."/>
        </authorList>
    </citation>
    <scope>NUCLEOTIDE SEQUENCE [LARGE SCALE GENOMIC DNA]</scope>
    <source>
        <strain>168</strain>
    </source>
</reference>